<name>SUFS_ESCF3</name>
<gene>
    <name evidence="1" type="primary">sufS</name>
    <name type="ordered locus">EFER_1372</name>
</gene>
<reference key="1">
    <citation type="journal article" date="2009" name="PLoS Genet.">
        <title>Organised genome dynamics in the Escherichia coli species results in highly diverse adaptive paths.</title>
        <authorList>
            <person name="Touchon M."/>
            <person name="Hoede C."/>
            <person name="Tenaillon O."/>
            <person name="Barbe V."/>
            <person name="Baeriswyl S."/>
            <person name="Bidet P."/>
            <person name="Bingen E."/>
            <person name="Bonacorsi S."/>
            <person name="Bouchier C."/>
            <person name="Bouvet O."/>
            <person name="Calteau A."/>
            <person name="Chiapello H."/>
            <person name="Clermont O."/>
            <person name="Cruveiller S."/>
            <person name="Danchin A."/>
            <person name="Diard M."/>
            <person name="Dossat C."/>
            <person name="Karoui M.E."/>
            <person name="Frapy E."/>
            <person name="Garry L."/>
            <person name="Ghigo J.M."/>
            <person name="Gilles A.M."/>
            <person name="Johnson J."/>
            <person name="Le Bouguenec C."/>
            <person name="Lescat M."/>
            <person name="Mangenot S."/>
            <person name="Martinez-Jehanne V."/>
            <person name="Matic I."/>
            <person name="Nassif X."/>
            <person name="Oztas S."/>
            <person name="Petit M.A."/>
            <person name="Pichon C."/>
            <person name="Rouy Z."/>
            <person name="Ruf C.S."/>
            <person name="Schneider D."/>
            <person name="Tourret J."/>
            <person name="Vacherie B."/>
            <person name="Vallenet D."/>
            <person name="Medigue C."/>
            <person name="Rocha E.P.C."/>
            <person name="Denamur E."/>
        </authorList>
    </citation>
    <scope>NUCLEOTIDE SEQUENCE [LARGE SCALE GENOMIC DNA]</scope>
    <source>
        <strain>ATCC 35469 / DSM 13698 / BCRC 15582 / CCUG 18766 / IAM 14443 / JCM 21226 / LMG 7866 / NBRC 102419 / NCTC 12128 / CDC 0568-73</strain>
    </source>
</reference>
<evidence type="ECO:0000255" key="1">
    <source>
        <dbReference type="HAMAP-Rule" id="MF_01831"/>
    </source>
</evidence>
<proteinExistence type="inferred from homology"/>
<comment type="function">
    <text evidence="1">Cysteine desulfurases mobilize the sulfur from L-cysteine to yield L-alanine, an essential step in sulfur metabolism for biosynthesis of a variety of sulfur-containing biomolecules. Component of the suf operon, which is activated and required under specific conditions such as oxidative stress and iron limitation. Acts as a potent selenocysteine lyase in vitro, that mobilizes selenium from L-selenocysteine. Selenocysteine lyase activity is however unsure in vivo.</text>
</comment>
<comment type="catalytic activity">
    <reaction evidence="1">
        <text>(sulfur carrier)-H + L-cysteine = (sulfur carrier)-SH + L-alanine</text>
        <dbReference type="Rhea" id="RHEA:43892"/>
        <dbReference type="Rhea" id="RHEA-COMP:14737"/>
        <dbReference type="Rhea" id="RHEA-COMP:14739"/>
        <dbReference type="ChEBI" id="CHEBI:29917"/>
        <dbReference type="ChEBI" id="CHEBI:35235"/>
        <dbReference type="ChEBI" id="CHEBI:57972"/>
        <dbReference type="ChEBI" id="CHEBI:64428"/>
        <dbReference type="EC" id="2.8.1.7"/>
    </reaction>
</comment>
<comment type="catalytic activity">
    <reaction evidence="1">
        <text>L-selenocysteine + AH2 = hydrogenselenide + L-alanine + A + H(+)</text>
        <dbReference type="Rhea" id="RHEA:11632"/>
        <dbReference type="ChEBI" id="CHEBI:13193"/>
        <dbReference type="ChEBI" id="CHEBI:15378"/>
        <dbReference type="ChEBI" id="CHEBI:17499"/>
        <dbReference type="ChEBI" id="CHEBI:29317"/>
        <dbReference type="ChEBI" id="CHEBI:57843"/>
        <dbReference type="ChEBI" id="CHEBI:57972"/>
        <dbReference type="EC" id="4.4.1.16"/>
    </reaction>
</comment>
<comment type="cofactor">
    <cofactor evidence="1">
        <name>pyridoxal 5'-phosphate</name>
        <dbReference type="ChEBI" id="CHEBI:597326"/>
    </cofactor>
</comment>
<comment type="pathway">
    <text evidence="1">Cofactor biosynthesis; iron-sulfur cluster biosynthesis.</text>
</comment>
<comment type="subunit">
    <text evidence="1">Homodimer. Interacts with SufE and the SufBCD complex composed of SufB, SufC and SufD. The interaction with SufE is required to mediate the direct transfer of the sulfur atom from the S-sulfanylcysteine.</text>
</comment>
<comment type="subcellular location">
    <subcellularLocation>
        <location evidence="1">Cytoplasm</location>
    </subcellularLocation>
</comment>
<comment type="similarity">
    <text evidence="1">Belongs to the class-V pyridoxal-phosphate-dependent aminotransferase family. Csd subfamily.</text>
</comment>
<accession>B7LQ96</accession>
<feature type="chain" id="PRO_1000188302" description="Cysteine desulfurase">
    <location>
        <begin position="1"/>
        <end position="406"/>
    </location>
</feature>
<feature type="active site" description="Cysteine persulfide intermediate" evidence="1">
    <location>
        <position position="364"/>
    </location>
</feature>
<feature type="modified residue" description="N6-(pyridoxal phosphate)lysine" evidence="1">
    <location>
        <position position="226"/>
    </location>
</feature>
<protein>
    <recommendedName>
        <fullName evidence="1">Cysteine desulfurase</fullName>
        <ecNumber evidence="1">2.8.1.7</ecNumber>
    </recommendedName>
    <alternativeName>
        <fullName evidence="1">Selenocysteine beta-lyase</fullName>
        <shortName evidence="1">SCL</shortName>
    </alternativeName>
    <alternativeName>
        <fullName evidence="1">Selenocysteine lyase</fullName>
        <ecNumber evidence="1">4.4.1.16</ecNumber>
    </alternativeName>
    <alternativeName>
        <fullName evidence="1">Selenocysteine reductase</fullName>
    </alternativeName>
</protein>
<sequence length="406" mass="44450">MTFSVDKVRADFPVLSREVNGLPLAYLDSAASAQKPSQVIDAEAEFYRHGYAAVHRGIHTLSAQATEKMENVRKRASLFINARSAEELVFVRGTTEGINLVANSWGNSNVRAGDNIIISQMEHHANIVPWQMLCARVGAELRVIPLNPDGTLQLETLPTLFDEKTRLLAITHVSNVLGTENPLVEMITLAHQHGAKVLVDGAQAVMHHPVDVQALDCDFYVFSGHKLYGPTGIGILYVKEALLQEMPPWEGGGSMIATVSLSEGTTWTKAPWRFEAGTPNTGGIIGLGAALEYVSALGLNNIAEYEQNLMHYALSQLESVPDLTLYGPQNRLGVIAFNLGKHHAYDVGSFLDNYGIAVRTGHHCAMPLMAYYNVPAMCRASLAMYNTHEEVDRLVTGLQRIHRLLG</sequence>
<organism>
    <name type="scientific">Escherichia fergusonii (strain ATCC 35469 / DSM 13698 / CCUG 18766 / IAM 14443 / JCM 21226 / LMG 7866 / NBRC 102419 / NCTC 12128 / CDC 0568-73)</name>
    <dbReference type="NCBI Taxonomy" id="585054"/>
    <lineage>
        <taxon>Bacteria</taxon>
        <taxon>Pseudomonadati</taxon>
        <taxon>Pseudomonadota</taxon>
        <taxon>Gammaproteobacteria</taxon>
        <taxon>Enterobacterales</taxon>
        <taxon>Enterobacteriaceae</taxon>
        <taxon>Escherichia</taxon>
    </lineage>
</organism>
<dbReference type="EC" id="2.8.1.7" evidence="1"/>
<dbReference type="EC" id="4.4.1.16" evidence="1"/>
<dbReference type="EMBL" id="CU928158">
    <property type="protein sequence ID" value="CAQ88893.1"/>
    <property type="molecule type" value="Genomic_DNA"/>
</dbReference>
<dbReference type="RefSeq" id="WP_000144590.1">
    <property type="nucleotide sequence ID" value="NC_011740.1"/>
</dbReference>
<dbReference type="SMR" id="B7LQ96"/>
<dbReference type="GeneID" id="75057585"/>
<dbReference type="KEGG" id="efe:EFER_1372"/>
<dbReference type="HOGENOM" id="CLU_003433_2_5_6"/>
<dbReference type="OrthoDB" id="9808002at2"/>
<dbReference type="UniPathway" id="UPA00266"/>
<dbReference type="Proteomes" id="UP000000745">
    <property type="component" value="Chromosome"/>
</dbReference>
<dbReference type="GO" id="GO:0005737">
    <property type="term" value="C:cytoplasm"/>
    <property type="evidence" value="ECO:0007669"/>
    <property type="project" value="UniProtKB-SubCell"/>
</dbReference>
<dbReference type="GO" id="GO:0031071">
    <property type="term" value="F:cysteine desulfurase activity"/>
    <property type="evidence" value="ECO:0007669"/>
    <property type="project" value="UniProtKB-UniRule"/>
</dbReference>
<dbReference type="GO" id="GO:0030170">
    <property type="term" value="F:pyridoxal phosphate binding"/>
    <property type="evidence" value="ECO:0007669"/>
    <property type="project" value="InterPro"/>
</dbReference>
<dbReference type="GO" id="GO:0009000">
    <property type="term" value="F:selenocysteine lyase activity"/>
    <property type="evidence" value="ECO:0007669"/>
    <property type="project" value="UniProtKB-UniRule"/>
</dbReference>
<dbReference type="GO" id="GO:0006534">
    <property type="term" value="P:cysteine metabolic process"/>
    <property type="evidence" value="ECO:0007669"/>
    <property type="project" value="InterPro"/>
</dbReference>
<dbReference type="CDD" id="cd06453">
    <property type="entry name" value="SufS_like"/>
    <property type="match status" value="1"/>
</dbReference>
<dbReference type="FunFam" id="3.40.640.10:FF:000042">
    <property type="entry name" value="Cysteine desulfurase"/>
    <property type="match status" value="1"/>
</dbReference>
<dbReference type="Gene3D" id="3.90.1150.10">
    <property type="entry name" value="Aspartate Aminotransferase, domain 1"/>
    <property type="match status" value="1"/>
</dbReference>
<dbReference type="Gene3D" id="3.40.640.10">
    <property type="entry name" value="Type I PLP-dependent aspartate aminotransferase-like (Major domain)"/>
    <property type="match status" value="1"/>
</dbReference>
<dbReference type="HAMAP" id="MF_01831">
    <property type="entry name" value="SufS_aminotrans_5"/>
    <property type="match status" value="1"/>
</dbReference>
<dbReference type="InterPro" id="IPR000192">
    <property type="entry name" value="Aminotrans_V_dom"/>
</dbReference>
<dbReference type="InterPro" id="IPR020578">
    <property type="entry name" value="Aminotrans_V_PyrdxlP_BS"/>
</dbReference>
<dbReference type="InterPro" id="IPR010970">
    <property type="entry name" value="Cys_dSase_SufS"/>
</dbReference>
<dbReference type="InterPro" id="IPR015424">
    <property type="entry name" value="PyrdxlP-dep_Trfase"/>
</dbReference>
<dbReference type="InterPro" id="IPR015421">
    <property type="entry name" value="PyrdxlP-dep_Trfase_major"/>
</dbReference>
<dbReference type="InterPro" id="IPR015422">
    <property type="entry name" value="PyrdxlP-dep_Trfase_small"/>
</dbReference>
<dbReference type="NCBIfam" id="NF006791">
    <property type="entry name" value="PRK09295.1"/>
    <property type="match status" value="1"/>
</dbReference>
<dbReference type="NCBIfam" id="TIGR01979">
    <property type="entry name" value="sufS"/>
    <property type="match status" value="1"/>
</dbReference>
<dbReference type="PANTHER" id="PTHR43586">
    <property type="entry name" value="CYSTEINE DESULFURASE"/>
    <property type="match status" value="1"/>
</dbReference>
<dbReference type="PANTHER" id="PTHR43586:SF25">
    <property type="entry name" value="CYSTEINE DESULFURASE"/>
    <property type="match status" value="1"/>
</dbReference>
<dbReference type="Pfam" id="PF00266">
    <property type="entry name" value="Aminotran_5"/>
    <property type="match status" value="1"/>
</dbReference>
<dbReference type="SUPFAM" id="SSF53383">
    <property type="entry name" value="PLP-dependent transferases"/>
    <property type="match status" value="1"/>
</dbReference>
<dbReference type="PROSITE" id="PS00595">
    <property type="entry name" value="AA_TRANSFER_CLASS_5"/>
    <property type="match status" value="1"/>
</dbReference>
<keyword id="KW-0963">Cytoplasm</keyword>
<keyword id="KW-0456">Lyase</keyword>
<keyword id="KW-0663">Pyridoxal phosphate</keyword>
<keyword id="KW-0808">Transferase</keyword>